<name>RDRP_I66A0</name>
<gene>
    <name evidence="1" type="primary">PB1</name>
</gene>
<reference key="1">
    <citation type="journal article" date="2006" name="Science">
        <title>Large-scale sequence analysis of avian influenza isolates.</title>
        <authorList>
            <person name="Obenauer J.C."/>
            <person name="Denson J."/>
            <person name="Mehta P.K."/>
            <person name="Su X."/>
            <person name="Mukatira S."/>
            <person name="Finkelstein D.B."/>
            <person name="Xu X."/>
            <person name="Wang J."/>
            <person name="Ma J."/>
            <person name="Fan Y."/>
            <person name="Rakestraw K.M."/>
            <person name="Webster R.G."/>
            <person name="Hoffmann E."/>
            <person name="Krauss S."/>
            <person name="Zheng J."/>
            <person name="Zhang Z."/>
            <person name="Naeve C.W."/>
        </authorList>
    </citation>
    <scope>NUCLEOTIDE SEQUENCE [GENOMIC RNA]</scope>
</reference>
<dbReference type="EC" id="2.7.7.48" evidence="1"/>
<dbReference type="EMBL" id="CY015107">
    <property type="protein sequence ID" value="ABI85143.1"/>
    <property type="molecule type" value="Genomic_RNA"/>
</dbReference>
<dbReference type="SMR" id="Q0A2D9"/>
<dbReference type="GO" id="GO:0030430">
    <property type="term" value="C:host cell cytoplasm"/>
    <property type="evidence" value="ECO:0007669"/>
    <property type="project" value="UniProtKB-SubCell"/>
</dbReference>
<dbReference type="GO" id="GO:0042025">
    <property type="term" value="C:host cell nucleus"/>
    <property type="evidence" value="ECO:0007669"/>
    <property type="project" value="UniProtKB-SubCell"/>
</dbReference>
<dbReference type="GO" id="GO:0000166">
    <property type="term" value="F:nucleotide binding"/>
    <property type="evidence" value="ECO:0007669"/>
    <property type="project" value="UniProtKB-UniRule"/>
</dbReference>
<dbReference type="GO" id="GO:0003723">
    <property type="term" value="F:RNA binding"/>
    <property type="evidence" value="ECO:0007669"/>
    <property type="project" value="InterPro"/>
</dbReference>
<dbReference type="GO" id="GO:0003968">
    <property type="term" value="F:RNA-directed RNA polymerase activity"/>
    <property type="evidence" value="ECO:0007669"/>
    <property type="project" value="UniProtKB-UniRule"/>
</dbReference>
<dbReference type="GO" id="GO:0006351">
    <property type="term" value="P:DNA-templated transcription"/>
    <property type="evidence" value="ECO:0007669"/>
    <property type="project" value="UniProtKB-UniRule"/>
</dbReference>
<dbReference type="GO" id="GO:0039657">
    <property type="term" value="P:symbiont-mediated suppression of host gene expression"/>
    <property type="evidence" value="ECO:0007669"/>
    <property type="project" value="UniProtKB-KW"/>
</dbReference>
<dbReference type="GO" id="GO:0039523">
    <property type="term" value="P:symbiont-mediated suppression of host mRNA transcription via inhibition of RNA polymerase II activity"/>
    <property type="evidence" value="ECO:0007669"/>
    <property type="project" value="UniProtKB-UniRule"/>
</dbReference>
<dbReference type="GO" id="GO:0039694">
    <property type="term" value="P:viral RNA genome replication"/>
    <property type="evidence" value="ECO:0007669"/>
    <property type="project" value="UniProtKB-UniRule"/>
</dbReference>
<dbReference type="GO" id="GO:0019083">
    <property type="term" value="P:viral transcription"/>
    <property type="evidence" value="ECO:0007669"/>
    <property type="project" value="UniProtKB-KW"/>
</dbReference>
<dbReference type="Gene3D" id="6.10.140.720">
    <property type="match status" value="1"/>
</dbReference>
<dbReference type="HAMAP" id="MF_04065">
    <property type="entry name" value="INFV_RDRP"/>
    <property type="match status" value="1"/>
</dbReference>
<dbReference type="InterPro" id="IPR007099">
    <property type="entry name" value="RNA-dir_pol_NSvirus"/>
</dbReference>
<dbReference type="InterPro" id="IPR001407">
    <property type="entry name" value="RNA_pol_PB1_influenza"/>
</dbReference>
<dbReference type="Pfam" id="PF00602">
    <property type="entry name" value="Flu_PB1"/>
    <property type="match status" value="1"/>
</dbReference>
<dbReference type="PIRSF" id="PIRSF000827">
    <property type="entry name" value="RdRPol_OMV"/>
    <property type="match status" value="1"/>
</dbReference>
<dbReference type="PROSITE" id="PS50525">
    <property type="entry name" value="RDRP_SSRNA_NEG_SEG"/>
    <property type="match status" value="1"/>
</dbReference>
<accession>Q0A2D9</accession>
<evidence type="ECO:0000255" key="1">
    <source>
        <dbReference type="HAMAP-Rule" id="MF_04065"/>
    </source>
</evidence>
<evidence type="ECO:0000256" key="2">
    <source>
        <dbReference type="SAM" id="MobiDB-lite"/>
    </source>
</evidence>
<feature type="chain" id="PRO_0000279614" description="RNA-directed RNA polymerase catalytic subunit">
    <location>
        <begin position="1"/>
        <end position="757"/>
    </location>
</feature>
<feature type="domain" description="RdRp catalytic" evidence="1">
    <location>
        <begin position="286"/>
        <end position="483"/>
    </location>
</feature>
<feature type="region of interest" description="Disordered" evidence="2">
    <location>
        <begin position="50"/>
        <end position="82"/>
    </location>
</feature>
<feature type="region of interest" description="Promoter-binding site" evidence="1">
    <location>
        <begin position="249"/>
        <end position="256"/>
    </location>
</feature>
<feature type="short sequence motif" description="Nuclear localization signal" evidence="1">
    <location>
        <begin position="187"/>
        <end position="195"/>
    </location>
</feature>
<feature type="short sequence motif" description="Nuclear localization signal" evidence="1">
    <location>
        <begin position="203"/>
        <end position="216"/>
    </location>
</feature>
<feature type="compositionally biased region" description="Polar residues" evidence="2">
    <location>
        <begin position="55"/>
        <end position="64"/>
    </location>
</feature>
<sequence length="757" mass="86354">MDVNPTLLFLKVPAQNAISTTFPYTGDPPYSHGTGTGYTMDTVNRTHQYSEKGKWTTNTETGAPQLNPIDGPLPEDNEPSGYAQTDCVLEAMAFLEESHPGIFENSCLETMEVVQQTRVDKLTQGRQTYDWTLNRNQPAATALANTIEVFRSNGLTANESGRLIDFLKDVMESMDKEEMEITTHFQRKRRVRDNMTKKMVTQRTIGKKKQKLNKRSYLIRALTLNTMTKDAERGKLKRRAIATPGMQIRGFVYFVETLARSICEKLEQSGLPVGGNEKKAKLANVVRKMMTNSQDTELSFTITGDNTKWNENQNPRMFLAMITYITRNQPEWFRNVLSIAPIMFSNKMARLGKGYMFESKGMKLRTQIPAEMLASIDLKYFNDSTRKKIEKIRPLLIDGTASLSPGMMMGMFNMLSTVLGVSILNLGQKRYTKTTYWWDGLQSSDDFALIVNAPNHEGIQAGVDRFYRTCKLVGINMSKKKSYINRTGTFEFTSFFYRYGFVANFSMELPSFGVSGINESADMSIGVTVIKNNMINNDLGPATAQMALQLFIKDYRYTYRCHRGDTQIQTRRSFELKKLWEQTRSKAGLLVSDGGPNLYNIRNLHIPEVCLKWELMDEDYQGRLCNPLNPFVSHKEIESVNNAVVMPAHGPAKSMEYDAVATTHSWIPKRNRSILNTSQRGILEDEQMYQKCCNLFEKFFPSSSYRRPVGISSMVEAMVSRARIDARIDFESGRIKKEEFAEIMKICSTIEELRRQK</sequence>
<organism>
    <name type="scientific">Influenza A virus (strain A/Turkey/Ontario/7732/1966 H5N9)</name>
    <dbReference type="NCBI Taxonomy" id="380301"/>
    <lineage>
        <taxon>Viruses</taxon>
        <taxon>Riboviria</taxon>
        <taxon>Orthornavirae</taxon>
        <taxon>Negarnaviricota</taxon>
        <taxon>Polyploviricotina</taxon>
        <taxon>Insthoviricetes</taxon>
        <taxon>Articulavirales</taxon>
        <taxon>Orthomyxoviridae</taxon>
        <taxon>Alphainfluenzavirus</taxon>
        <taxon>Alphainfluenzavirus influenzae</taxon>
        <taxon>Influenza A virus</taxon>
    </lineage>
</organism>
<comment type="function">
    <text evidence="1">RNA-dependent RNA polymerase which is responsible for replication and transcription of virus RNA segments. The transcription of viral mRNAs occurs by a unique mechanism called cap-snatching. 5' methylated caps of cellular mRNAs are cleaved after 10-13 nucleotides by PA. In turn, these short capped RNAs are used as primers by PB1 for transcription of viral mRNAs. During virus replication, PB1 initiates RNA synthesis and copy vRNA into complementary RNA (cRNA) which in turn serves as a template for the production of more vRNAs.</text>
</comment>
<comment type="catalytic activity">
    <reaction evidence="1">
        <text>RNA(n) + a ribonucleoside 5'-triphosphate = RNA(n+1) + diphosphate</text>
        <dbReference type="Rhea" id="RHEA:21248"/>
        <dbReference type="Rhea" id="RHEA-COMP:14527"/>
        <dbReference type="Rhea" id="RHEA-COMP:17342"/>
        <dbReference type="ChEBI" id="CHEBI:33019"/>
        <dbReference type="ChEBI" id="CHEBI:61557"/>
        <dbReference type="ChEBI" id="CHEBI:140395"/>
        <dbReference type="EC" id="2.7.7.48"/>
    </reaction>
</comment>
<comment type="subunit">
    <text evidence="1">Influenza RNA polymerase is composed of three subunits: PB1, PB2 and PA. Interacts (via N-terminus) with PA (via C-terminus). Interacts (via C-terminus) with PB2 (via N-terminus); this interaction is essential for transcription initiation.</text>
</comment>
<comment type="subcellular location">
    <subcellularLocation>
        <location evidence="1">Host nucleus</location>
    </subcellularLocation>
    <subcellularLocation>
        <location evidence="1">Host cytoplasm</location>
    </subcellularLocation>
</comment>
<comment type="PTM">
    <text evidence="1">Phosphorylated by host PRKCA.</text>
</comment>
<comment type="similarity">
    <text evidence="1">Belongs to the influenza viruses polymerase PB1 family.</text>
</comment>
<organismHost>
    <name type="scientific">Aves</name>
    <dbReference type="NCBI Taxonomy" id="8782"/>
</organismHost>
<keyword id="KW-1262">Eukaryotic host gene expression shutoff by virus</keyword>
<keyword id="KW-1191">Eukaryotic host transcription shutoff by virus</keyword>
<keyword id="KW-1035">Host cytoplasm</keyword>
<keyword id="KW-1190">Host gene expression shutoff by virus</keyword>
<keyword id="KW-1048">Host nucleus</keyword>
<keyword id="KW-0945">Host-virus interaction</keyword>
<keyword id="KW-1104">Inhibition of host RNA polymerase II by virus</keyword>
<keyword id="KW-0547">Nucleotide-binding</keyword>
<keyword id="KW-0548">Nucleotidyltransferase</keyword>
<keyword id="KW-0597">Phosphoprotein</keyword>
<keyword id="KW-0696">RNA-directed RNA polymerase</keyword>
<keyword id="KW-0808">Transferase</keyword>
<keyword id="KW-0693">Viral RNA replication</keyword>
<keyword id="KW-1195">Viral transcription</keyword>
<protein>
    <recommendedName>
        <fullName evidence="1">RNA-directed RNA polymerase catalytic subunit</fullName>
        <ecNumber evidence="1">2.7.7.48</ecNumber>
    </recommendedName>
    <alternativeName>
        <fullName evidence="1">Polymerase basic protein 1</fullName>
        <shortName evidence="1">PB1</shortName>
    </alternativeName>
    <alternativeName>
        <fullName evidence="1">RNA-directed RNA polymerase subunit P1</fullName>
    </alternativeName>
</protein>
<proteinExistence type="inferred from homology"/>